<organism>
    <name type="scientific">Bos taurus</name>
    <name type="common">Bovine</name>
    <dbReference type="NCBI Taxonomy" id="9913"/>
    <lineage>
        <taxon>Eukaryota</taxon>
        <taxon>Metazoa</taxon>
        <taxon>Chordata</taxon>
        <taxon>Craniata</taxon>
        <taxon>Vertebrata</taxon>
        <taxon>Euteleostomi</taxon>
        <taxon>Mammalia</taxon>
        <taxon>Eutheria</taxon>
        <taxon>Laurasiatheria</taxon>
        <taxon>Artiodactyla</taxon>
        <taxon>Ruminantia</taxon>
        <taxon>Pecora</taxon>
        <taxon>Bovidae</taxon>
        <taxon>Bovinae</taxon>
        <taxon>Bos</taxon>
    </lineage>
</organism>
<keyword id="KW-0002">3D-structure</keyword>
<keyword id="KW-0903">Direct protein sequencing</keyword>
<keyword id="KW-1015">Disulfide bond</keyword>
<keyword id="KW-0325">Glycoprotein</keyword>
<keyword id="KW-0378">Hydrolase</keyword>
<keyword id="KW-0645">Protease</keyword>
<keyword id="KW-1185">Reference proteome</keyword>
<keyword id="KW-0964">Secreted</keyword>
<keyword id="KW-0720">Serine protease</keyword>
<keyword id="KW-0732">Signal</keyword>
<keyword id="KW-0865">Zymogen</keyword>
<protein>
    <recommendedName>
        <fullName>Chymotrypsin-C</fullName>
        <ecNumber>3.4.21.2</ecNumber>
    </recommendedName>
    <alternativeName>
        <fullName>bPTLP</fullName>
    </alternativeName>
</protein>
<comment type="function">
    <text evidence="2 3">Regulates activation and degradation of trypsinogens and procarboxypeptidases by targeting specific cleavage sites within their zymogen precursors (By similarity). Has chymotrypsin-type protease activity and hypocalcemic activity (By similarity).</text>
</comment>
<comment type="catalytic activity">
    <reaction>
        <text>Preferential cleavage: Leu-|-Xaa, Tyr-|-Xaa, Phe-|-Xaa, Met-|-Xaa, Trp-|-Xaa, Gln-|-Xaa, Asn-|-Xaa.</text>
        <dbReference type="EC" id="3.4.21.2"/>
    </reaction>
</comment>
<comment type="subunit">
    <text>Monomer. The zymogen is secreted as a ternary complex composed of procarboxypeptidase A, chymotrypsinogen C and proproteinase E.</text>
</comment>
<comment type="subcellular location">
    <subcellularLocation>
        <location evidence="1">Secreted</location>
        <location evidence="1">Extracellular space</location>
    </subcellularLocation>
</comment>
<comment type="tissue specificity">
    <text evidence="6 8">Pancreas.</text>
</comment>
<comment type="similarity">
    <text evidence="5">Belongs to the peptidase S1 family. Elastase subfamily.</text>
</comment>
<feature type="signal peptide">
    <location>
        <begin position="1"/>
        <end position="16"/>
    </location>
</feature>
<feature type="propeptide" id="PRO_0000288614" description="Activation peptide" evidence="7">
    <location>
        <begin position="17"/>
        <end position="29"/>
    </location>
</feature>
<feature type="chain" id="PRO_0000288615" description="Chymotrypsin-C">
    <location>
        <begin position="30"/>
        <end position="268"/>
    </location>
</feature>
<feature type="domain" description="Peptidase S1" evidence="5">
    <location>
        <begin position="30"/>
        <end position="268"/>
    </location>
</feature>
<feature type="active site" description="Charge relay system" evidence="1">
    <location>
        <position position="74"/>
    </location>
</feature>
<feature type="active site" description="Charge relay system" evidence="1">
    <location>
        <position position="121"/>
    </location>
</feature>
<feature type="active site" description="Charge relay system" evidence="1">
    <location>
        <position position="216"/>
    </location>
</feature>
<feature type="glycosylation site" description="N-linked (GlcNAc...) asparagine" evidence="4">
    <location>
        <position position="25"/>
    </location>
</feature>
<feature type="disulfide bond" evidence="5">
    <location>
        <begin position="17"/>
        <end position="141"/>
    </location>
</feature>
<feature type="disulfide bond" evidence="5">
    <location>
        <begin position="59"/>
        <end position="75"/>
    </location>
</feature>
<feature type="disulfide bond" evidence="5">
    <location>
        <begin position="155"/>
        <end position="222"/>
    </location>
</feature>
<feature type="disulfide bond" evidence="5">
    <location>
        <begin position="186"/>
        <end position="202"/>
    </location>
</feature>
<feature type="disulfide bond" evidence="5">
    <location>
        <begin position="212"/>
        <end position="243"/>
    </location>
</feature>
<feature type="strand" evidence="9">
    <location>
        <begin position="26"/>
        <end position="29"/>
    </location>
</feature>
<feature type="strand" evidence="9">
    <location>
        <begin position="44"/>
        <end position="51"/>
    </location>
</feature>
<feature type="strand" evidence="9">
    <location>
        <begin position="54"/>
        <end position="65"/>
    </location>
</feature>
<feature type="strand" evidence="9">
    <location>
        <begin position="68"/>
        <end position="71"/>
    </location>
</feature>
<feature type="helix" evidence="9">
    <location>
        <begin position="73"/>
        <end position="75"/>
    </location>
</feature>
<feature type="strand" evidence="9">
    <location>
        <begin position="82"/>
        <end position="87"/>
    </location>
</feature>
<feature type="strand" evidence="9">
    <location>
        <begin position="100"/>
        <end position="109"/>
    </location>
</feature>
<feature type="turn" evidence="9">
    <location>
        <begin position="115"/>
        <end position="118"/>
    </location>
</feature>
<feature type="strand" evidence="9">
    <location>
        <begin position="123"/>
        <end position="129"/>
    </location>
</feature>
<feature type="strand" evidence="9">
    <location>
        <begin position="154"/>
        <end position="157"/>
    </location>
</feature>
<feature type="strand" evidence="9">
    <location>
        <begin position="177"/>
        <end position="179"/>
    </location>
</feature>
<feature type="helix" evidence="9">
    <location>
        <begin position="183"/>
        <end position="186"/>
    </location>
</feature>
<feature type="turn" evidence="9">
    <location>
        <begin position="189"/>
        <end position="195"/>
    </location>
</feature>
<feature type="strand" evidence="9">
    <location>
        <begin position="200"/>
        <end position="203"/>
    </location>
</feature>
<feature type="strand" evidence="9">
    <location>
        <begin position="219"/>
        <end position="225"/>
    </location>
</feature>
<feature type="strand" evidence="9">
    <location>
        <begin position="227"/>
        <end position="237"/>
    </location>
</feature>
<feature type="strand" evidence="9">
    <location>
        <begin position="250"/>
        <end position="254"/>
    </location>
</feature>
<feature type="helix" evidence="9">
    <location>
        <begin position="255"/>
        <end position="258"/>
    </location>
</feature>
<feature type="helix" evidence="9">
    <location>
        <begin position="259"/>
        <end position="265"/>
    </location>
</feature>
<proteinExistence type="evidence at protein level"/>
<name>CTRC_BOVIN</name>
<gene>
    <name type="primary">CTRC</name>
</gene>
<sequence>MLGITVFTTFLAYASSCGAPIFQPNLSARVVGGEDAIPHSWPWQISLQYLRDNTWRHTCGGTLITPNHVLTAAHCISNTLTYRVALGKNNLEVEDEAGSLYVGVDTIFVHEKWNSFLVRNDIALIKLAETVELSDTIQVACLPEEGSLLPQDYPCFVTGWGRLYTNGPIAAELQQGLQPVVDYATCSQRDWWGTTVKETMVCAGGDGVISACNGDSGGPLNCQAENGNWDVRGIVSFGSGLSCNTFKKPTVFTRVSAYIDWINQKLQL</sequence>
<dbReference type="EC" id="3.4.21.2"/>
<dbReference type="EMBL" id="BC134798">
    <property type="protein sequence ID" value="AAI34799.1"/>
    <property type="molecule type" value="mRNA"/>
</dbReference>
<dbReference type="EMBL" id="BC142035">
    <property type="protein sequence ID" value="AAI42036.1"/>
    <property type="molecule type" value="mRNA"/>
</dbReference>
<dbReference type="EMBL" id="CK771392">
    <property type="status" value="NOT_ANNOTATED_CDS"/>
    <property type="molecule type" value="mRNA"/>
</dbReference>
<dbReference type="PIR" id="PU0036">
    <property type="entry name" value="PU0036"/>
</dbReference>
<dbReference type="RefSeq" id="NP_001092435.1">
    <property type="nucleotide sequence ID" value="NM_001098965.1"/>
</dbReference>
<dbReference type="PDB" id="1PYT">
    <property type="method" value="X-ray"/>
    <property type="resolution" value="2.35 A"/>
    <property type="chains" value="D=17-268"/>
</dbReference>
<dbReference type="PDBsum" id="1PYT"/>
<dbReference type="SMR" id="Q7M3E1"/>
<dbReference type="FunCoup" id="Q7M3E1">
    <property type="interactions" value="13"/>
</dbReference>
<dbReference type="STRING" id="9913.ENSBTAP00000069832"/>
<dbReference type="MEROPS" id="S01.157"/>
<dbReference type="GlyCosmos" id="Q7M3E1">
    <property type="glycosylation" value="1 site, No reported glycans"/>
</dbReference>
<dbReference type="GlyGen" id="Q7M3E1">
    <property type="glycosylation" value="1 site"/>
</dbReference>
<dbReference type="PaxDb" id="9913-ENSBTAP00000033942"/>
<dbReference type="GeneID" id="514047"/>
<dbReference type="KEGG" id="bta:514047"/>
<dbReference type="CTD" id="11330"/>
<dbReference type="eggNOG" id="KOG3627">
    <property type="taxonomic scope" value="Eukaryota"/>
</dbReference>
<dbReference type="HOGENOM" id="CLU_006842_0_4_1"/>
<dbReference type="InParanoid" id="Q7M3E1"/>
<dbReference type="OrthoDB" id="10061449at2759"/>
<dbReference type="TreeFam" id="TF330455"/>
<dbReference type="EvolutionaryTrace" id="Q7M3E1"/>
<dbReference type="Proteomes" id="UP000009136">
    <property type="component" value="Unplaced"/>
</dbReference>
<dbReference type="GO" id="GO:0005615">
    <property type="term" value="C:extracellular space"/>
    <property type="evidence" value="ECO:0000318"/>
    <property type="project" value="GO_Central"/>
</dbReference>
<dbReference type="GO" id="GO:0004252">
    <property type="term" value="F:serine-type endopeptidase activity"/>
    <property type="evidence" value="ECO:0000318"/>
    <property type="project" value="GO_Central"/>
</dbReference>
<dbReference type="GO" id="GO:0006508">
    <property type="term" value="P:proteolysis"/>
    <property type="evidence" value="ECO:0000318"/>
    <property type="project" value="GO_Central"/>
</dbReference>
<dbReference type="CDD" id="cd00190">
    <property type="entry name" value="Tryp_SPc"/>
    <property type="match status" value="1"/>
</dbReference>
<dbReference type="FunFam" id="2.40.10.10:FF:000280">
    <property type="match status" value="1"/>
</dbReference>
<dbReference type="FunFam" id="2.40.10.10:FF:000004">
    <property type="entry name" value="Tryptase gamma 1"/>
    <property type="match status" value="1"/>
</dbReference>
<dbReference type="Gene3D" id="2.40.10.10">
    <property type="entry name" value="Trypsin-like serine proteases"/>
    <property type="match status" value="2"/>
</dbReference>
<dbReference type="InterPro" id="IPR050850">
    <property type="entry name" value="Peptidase_S1_Elastase_sf"/>
</dbReference>
<dbReference type="InterPro" id="IPR009003">
    <property type="entry name" value="Peptidase_S1_PA"/>
</dbReference>
<dbReference type="InterPro" id="IPR043504">
    <property type="entry name" value="Peptidase_S1_PA_chymotrypsin"/>
</dbReference>
<dbReference type="InterPro" id="IPR001314">
    <property type="entry name" value="Peptidase_S1A"/>
</dbReference>
<dbReference type="InterPro" id="IPR001254">
    <property type="entry name" value="Trypsin_dom"/>
</dbReference>
<dbReference type="InterPro" id="IPR018114">
    <property type="entry name" value="TRYPSIN_HIS"/>
</dbReference>
<dbReference type="InterPro" id="IPR033116">
    <property type="entry name" value="TRYPSIN_SER"/>
</dbReference>
<dbReference type="PANTHER" id="PTHR24257">
    <property type="entry name" value="CHYMOTRYPSIN-LIKE ELASTASE FAMILY MEMBER"/>
    <property type="match status" value="1"/>
</dbReference>
<dbReference type="PANTHER" id="PTHR24257:SF31">
    <property type="entry name" value="ELASTASE 3 LIKE ISOFORM X1"/>
    <property type="match status" value="1"/>
</dbReference>
<dbReference type="Pfam" id="PF00089">
    <property type="entry name" value="Trypsin"/>
    <property type="match status" value="1"/>
</dbReference>
<dbReference type="PRINTS" id="PR00722">
    <property type="entry name" value="CHYMOTRYPSIN"/>
</dbReference>
<dbReference type="SMART" id="SM00020">
    <property type="entry name" value="Tryp_SPc"/>
    <property type="match status" value="1"/>
</dbReference>
<dbReference type="SUPFAM" id="SSF50494">
    <property type="entry name" value="Trypsin-like serine proteases"/>
    <property type="match status" value="1"/>
</dbReference>
<dbReference type="PROSITE" id="PS50240">
    <property type="entry name" value="TRYPSIN_DOM"/>
    <property type="match status" value="1"/>
</dbReference>
<dbReference type="PROSITE" id="PS00134">
    <property type="entry name" value="TRYPSIN_HIS"/>
    <property type="match status" value="1"/>
</dbReference>
<dbReference type="PROSITE" id="PS00135">
    <property type="entry name" value="TRYPSIN_SER"/>
    <property type="match status" value="1"/>
</dbReference>
<accession>Q7M3E1</accession>
<accession>A5PJB3</accession>
<reference key="1">
    <citation type="submission" date="2007-06" db="EMBL/GenBank/DDBJ databases">
        <authorList>
            <consortium name="NIH - Mammalian Gene Collection (MGC) project"/>
        </authorList>
    </citation>
    <scope>NUCLEOTIDE SEQUENCE [LARGE SCALE MRNA]</scope>
    <source>
        <strain>Hereford</strain>
        <tissue>Fetal pancreas</tissue>
    </source>
</reference>
<reference key="2">
    <citation type="journal article" date="2001" name="Genome Res.">
        <title>Sequence evaluation of four pooled-tissue normalized bovine cDNA libraries and construction of a gene index for cattle.</title>
        <authorList>
            <person name="Smith T.P.L."/>
            <person name="Grosse W.M."/>
            <person name="Freking B.A."/>
            <person name="Roberts A.J."/>
            <person name="Stone R.T."/>
            <person name="Casas E."/>
            <person name="Wray J.E."/>
            <person name="White J."/>
            <person name="Cho J."/>
            <person name="Fahrenkrug S.C."/>
            <person name="Bennett G.L."/>
            <person name="Heaton M.P."/>
            <person name="Laegreid W.W."/>
            <person name="Rohrer G.A."/>
            <person name="Chitko-McKown C.G."/>
            <person name="Pertea G."/>
            <person name="Holt I."/>
            <person name="Karamycheva S."/>
            <person name="Liang F."/>
            <person name="Quackenbush J."/>
            <person name="Keele J.W."/>
        </authorList>
    </citation>
    <scope>NUCLEOTIDE SEQUENCE [LARGE SCALE MRNA] OF 38-268</scope>
</reference>
<reference key="3">
    <citation type="journal article" date="1996" name="J. Biochem.">
        <title>Purification and characterization of a novel serine proteinase from the microsomal fraction of bovine pancreas.</title>
        <authorList>
            <person name="Tsuji A."/>
            <person name="Edazawa K."/>
            <person name="Sakiyama K."/>
            <person name="Nagata K."/>
            <person name="Sasaki Y."/>
            <person name="Nagamune H."/>
            <person name="Matsuda Y."/>
        </authorList>
    </citation>
    <scope>PROTEIN SEQUENCE OF 30-52</scope>
    <source>
        <tissue>Pancreas</tissue>
    </source>
</reference>
<reference key="4">
    <citation type="journal article" date="1995" name="EMBO J.">
        <title>The three-dimensional structure of the native ternary complex of bovine pancreatic procarboxypeptidase A with proproteinase E and chymotrypsinogen C.</title>
        <authorList>
            <person name="Gomis-Rueth F.-X."/>
            <person name="Gomez M."/>
            <person name="Bode W."/>
            <person name="Huber R."/>
            <person name="Aviles F.X."/>
        </authorList>
    </citation>
    <scope>X-RAY CRYSTALLOGRAPHY (2.6 ANGSTROMS) OF 17-268 OF COMPLEX WITH CPA1 AND PPE</scope>
    <scope>DISULFIDE BONDS</scope>
    <scope>TISSUE SPECIFICITY</scope>
</reference>
<reference key="5">
    <citation type="journal article" date="1997" name="J. Mol. Biol.">
        <title>Crystal structure of an oligomer of proteolytic zymogens: detailed conformational analysis of the bovine ternary complex and implications for their activation.</title>
        <authorList>
            <person name="Gomis-Ruth F.-X."/>
            <person name="Gomez-Ortiz M."/>
            <person name="Vendrell J."/>
            <person name="Ventura S."/>
            <person name="Bode W."/>
            <person name="Huber R."/>
            <person name="Aviles F.X."/>
        </authorList>
    </citation>
    <scope>X-RAY CRYSTALLOGRAPHY (2.35 ANGSTROMS) OF 17-268 OF COMPLEX WITH CPA1 AND PPE</scope>
    <scope>DISULFIDE BONDS</scope>
    <scope>TISSUE SPECIFICITY</scope>
</reference>
<evidence type="ECO:0000250" key="1"/>
<evidence type="ECO:0000250" key="2">
    <source>
        <dbReference type="UniProtKB" id="Q3SYP2"/>
    </source>
</evidence>
<evidence type="ECO:0000250" key="3">
    <source>
        <dbReference type="UniProtKB" id="Q99895"/>
    </source>
</evidence>
<evidence type="ECO:0000255" key="4"/>
<evidence type="ECO:0000255" key="5">
    <source>
        <dbReference type="PROSITE-ProRule" id="PRU00274"/>
    </source>
</evidence>
<evidence type="ECO:0000269" key="6">
    <source>
    </source>
</evidence>
<evidence type="ECO:0000269" key="7">
    <source>
    </source>
</evidence>
<evidence type="ECO:0000269" key="8">
    <source>
    </source>
</evidence>
<evidence type="ECO:0007829" key="9">
    <source>
        <dbReference type="PDB" id="1PYT"/>
    </source>
</evidence>